<protein>
    <recommendedName>
        <fullName evidence="1">Phosphopantetheine adenylyltransferase</fullName>
        <ecNumber evidence="1">2.7.7.3</ecNumber>
    </recommendedName>
    <alternativeName>
        <fullName evidence="1">Dephospho-CoA pyrophosphorylase</fullName>
    </alternativeName>
    <alternativeName>
        <fullName evidence="1">Pantetheine-phosphate adenylyltransferase</fullName>
        <shortName evidence="1">PPAT</shortName>
    </alternativeName>
</protein>
<dbReference type="EC" id="2.7.7.3" evidence="1"/>
<dbReference type="EMBL" id="AE000513">
    <property type="protein sequence ID" value="AAF10221.1"/>
    <property type="molecule type" value="Genomic_DNA"/>
</dbReference>
<dbReference type="PIR" id="G75492">
    <property type="entry name" value="G75492"/>
</dbReference>
<dbReference type="RefSeq" id="NP_294365.1">
    <property type="nucleotide sequence ID" value="NC_001263.1"/>
</dbReference>
<dbReference type="RefSeq" id="WP_010887287.1">
    <property type="nucleotide sequence ID" value="NC_001263.1"/>
</dbReference>
<dbReference type="SMR" id="Q9RWM4"/>
<dbReference type="FunCoup" id="Q9RWM4">
    <property type="interactions" value="420"/>
</dbReference>
<dbReference type="STRING" id="243230.DR_0642"/>
<dbReference type="PaxDb" id="243230-DR_0642"/>
<dbReference type="EnsemblBacteria" id="AAF10221">
    <property type="protein sequence ID" value="AAF10221"/>
    <property type="gene ID" value="DR_0642"/>
</dbReference>
<dbReference type="GeneID" id="69516889"/>
<dbReference type="KEGG" id="dra:DR_0642"/>
<dbReference type="PATRIC" id="fig|243230.17.peg.821"/>
<dbReference type="eggNOG" id="COG0669">
    <property type="taxonomic scope" value="Bacteria"/>
</dbReference>
<dbReference type="HOGENOM" id="CLU_100149_1_1_0"/>
<dbReference type="InParanoid" id="Q9RWM4"/>
<dbReference type="OrthoDB" id="9806661at2"/>
<dbReference type="UniPathway" id="UPA00241">
    <property type="reaction ID" value="UER00355"/>
</dbReference>
<dbReference type="Proteomes" id="UP000002524">
    <property type="component" value="Chromosome 1"/>
</dbReference>
<dbReference type="GO" id="GO:0005737">
    <property type="term" value="C:cytoplasm"/>
    <property type="evidence" value="ECO:0007669"/>
    <property type="project" value="UniProtKB-SubCell"/>
</dbReference>
<dbReference type="GO" id="GO:0005524">
    <property type="term" value="F:ATP binding"/>
    <property type="evidence" value="ECO:0007669"/>
    <property type="project" value="UniProtKB-KW"/>
</dbReference>
<dbReference type="GO" id="GO:0004595">
    <property type="term" value="F:pantetheine-phosphate adenylyltransferase activity"/>
    <property type="evidence" value="ECO:0000318"/>
    <property type="project" value="GO_Central"/>
</dbReference>
<dbReference type="GO" id="GO:0015937">
    <property type="term" value="P:coenzyme A biosynthetic process"/>
    <property type="evidence" value="ECO:0000318"/>
    <property type="project" value="GO_Central"/>
</dbReference>
<dbReference type="CDD" id="cd02163">
    <property type="entry name" value="PPAT"/>
    <property type="match status" value="1"/>
</dbReference>
<dbReference type="Gene3D" id="3.40.50.620">
    <property type="entry name" value="HUPs"/>
    <property type="match status" value="1"/>
</dbReference>
<dbReference type="HAMAP" id="MF_00151">
    <property type="entry name" value="PPAT_bact"/>
    <property type="match status" value="1"/>
</dbReference>
<dbReference type="InterPro" id="IPR004821">
    <property type="entry name" value="Cyt_trans-like"/>
</dbReference>
<dbReference type="InterPro" id="IPR001980">
    <property type="entry name" value="PPAT"/>
</dbReference>
<dbReference type="InterPro" id="IPR014729">
    <property type="entry name" value="Rossmann-like_a/b/a_fold"/>
</dbReference>
<dbReference type="NCBIfam" id="TIGR01510">
    <property type="entry name" value="coaD_prev_kdtB"/>
    <property type="match status" value="1"/>
</dbReference>
<dbReference type="NCBIfam" id="TIGR00125">
    <property type="entry name" value="cyt_tran_rel"/>
    <property type="match status" value="1"/>
</dbReference>
<dbReference type="PANTHER" id="PTHR21342">
    <property type="entry name" value="PHOSPHOPANTETHEINE ADENYLYLTRANSFERASE"/>
    <property type="match status" value="1"/>
</dbReference>
<dbReference type="PANTHER" id="PTHR21342:SF1">
    <property type="entry name" value="PHOSPHOPANTETHEINE ADENYLYLTRANSFERASE"/>
    <property type="match status" value="1"/>
</dbReference>
<dbReference type="Pfam" id="PF01467">
    <property type="entry name" value="CTP_transf_like"/>
    <property type="match status" value="1"/>
</dbReference>
<dbReference type="PRINTS" id="PR01020">
    <property type="entry name" value="LPSBIOSNTHSS"/>
</dbReference>
<dbReference type="SUPFAM" id="SSF52374">
    <property type="entry name" value="Nucleotidylyl transferase"/>
    <property type="match status" value="1"/>
</dbReference>
<evidence type="ECO:0000255" key="1">
    <source>
        <dbReference type="HAMAP-Rule" id="MF_00151"/>
    </source>
</evidence>
<organism>
    <name type="scientific">Deinococcus radiodurans (strain ATCC 13939 / DSM 20539 / JCM 16871 / CCUG 27074 / LMG 4051 / NBRC 15346 / NCIMB 9279 / VKM B-1422 / R1)</name>
    <dbReference type="NCBI Taxonomy" id="243230"/>
    <lineage>
        <taxon>Bacteria</taxon>
        <taxon>Thermotogati</taxon>
        <taxon>Deinococcota</taxon>
        <taxon>Deinococci</taxon>
        <taxon>Deinococcales</taxon>
        <taxon>Deinococcaceae</taxon>
        <taxon>Deinococcus</taxon>
    </lineage>
</organism>
<feature type="chain" id="PRO_0000156201" description="Phosphopantetheine adenylyltransferase">
    <location>
        <begin position="1"/>
        <end position="167"/>
    </location>
</feature>
<feature type="binding site" evidence="1">
    <location>
        <begin position="8"/>
        <end position="9"/>
    </location>
    <ligand>
        <name>ATP</name>
        <dbReference type="ChEBI" id="CHEBI:30616"/>
    </ligand>
</feature>
<feature type="binding site" evidence="1">
    <location>
        <position position="8"/>
    </location>
    <ligand>
        <name>substrate</name>
    </ligand>
</feature>
<feature type="binding site" evidence="1">
    <location>
        <position position="16"/>
    </location>
    <ligand>
        <name>ATP</name>
        <dbReference type="ChEBI" id="CHEBI:30616"/>
    </ligand>
</feature>
<feature type="binding site" evidence="1">
    <location>
        <position position="40"/>
    </location>
    <ligand>
        <name>substrate</name>
    </ligand>
</feature>
<feature type="binding site" evidence="1">
    <location>
        <position position="74"/>
    </location>
    <ligand>
        <name>substrate</name>
    </ligand>
</feature>
<feature type="binding site" evidence="1">
    <location>
        <position position="88"/>
    </location>
    <ligand>
        <name>substrate</name>
    </ligand>
</feature>
<feature type="binding site" evidence="1">
    <location>
        <begin position="89"/>
        <end position="91"/>
    </location>
    <ligand>
        <name>ATP</name>
        <dbReference type="ChEBI" id="CHEBI:30616"/>
    </ligand>
</feature>
<feature type="binding site" evidence="1">
    <location>
        <position position="99"/>
    </location>
    <ligand>
        <name>ATP</name>
        <dbReference type="ChEBI" id="CHEBI:30616"/>
    </ligand>
</feature>
<feature type="binding site" evidence="1">
    <location>
        <begin position="123"/>
        <end position="129"/>
    </location>
    <ligand>
        <name>ATP</name>
        <dbReference type="ChEBI" id="CHEBI:30616"/>
    </ligand>
</feature>
<feature type="site" description="Transition state stabilizer" evidence="1">
    <location>
        <position position="16"/>
    </location>
</feature>
<accession>Q9RWM4</accession>
<name>COAD_DEIRA</name>
<keyword id="KW-0067">ATP-binding</keyword>
<keyword id="KW-0173">Coenzyme A biosynthesis</keyword>
<keyword id="KW-0963">Cytoplasm</keyword>
<keyword id="KW-0460">Magnesium</keyword>
<keyword id="KW-0547">Nucleotide-binding</keyword>
<keyword id="KW-0548">Nucleotidyltransferase</keyword>
<keyword id="KW-1185">Reference proteome</keyword>
<keyword id="KW-0808">Transferase</keyword>
<gene>
    <name evidence="1" type="primary">coaD</name>
    <name type="synonym">kdtB</name>
    <name type="ordered locus">DR_0642</name>
</gene>
<sequence>MNAVFPGSFDPVTSGHMDVLTRASHMFEQVTVTVMHNARKQGRHLFTLDERLEILREATAGLPNVRVDSFSGLLVDYVAQQGRSVIVRGLRAVSDYEYELQIAHLNRQIGEVETVFIMAATHWSFVSSSMVKEIASYGGKIHEMVPPASEAALRRKFAEVYDKRDDA</sequence>
<reference key="1">
    <citation type="journal article" date="1999" name="Science">
        <title>Genome sequence of the radioresistant bacterium Deinococcus radiodurans R1.</title>
        <authorList>
            <person name="White O."/>
            <person name="Eisen J.A."/>
            <person name="Heidelberg J.F."/>
            <person name="Hickey E.K."/>
            <person name="Peterson J.D."/>
            <person name="Dodson R.J."/>
            <person name="Haft D.H."/>
            <person name="Gwinn M.L."/>
            <person name="Nelson W.C."/>
            <person name="Richardson D.L."/>
            <person name="Moffat K.S."/>
            <person name="Qin H."/>
            <person name="Jiang L."/>
            <person name="Pamphile W."/>
            <person name="Crosby M."/>
            <person name="Shen M."/>
            <person name="Vamathevan J.J."/>
            <person name="Lam P."/>
            <person name="McDonald L.A."/>
            <person name="Utterback T.R."/>
            <person name="Zalewski C."/>
            <person name="Makarova K.S."/>
            <person name="Aravind L."/>
            <person name="Daly M.J."/>
            <person name="Minton K.W."/>
            <person name="Fleischmann R.D."/>
            <person name="Ketchum K.A."/>
            <person name="Nelson K.E."/>
            <person name="Salzberg S.L."/>
            <person name="Smith H.O."/>
            <person name="Venter J.C."/>
            <person name="Fraser C.M."/>
        </authorList>
    </citation>
    <scope>NUCLEOTIDE SEQUENCE [LARGE SCALE GENOMIC DNA]</scope>
    <source>
        <strain>ATCC 13939 / DSM 20539 / JCM 16871 / CCUG 27074 / LMG 4051 / NBRC 15346 / NCIMB 9279 / VKM B-1422 / R1</strain>
    </source>
</reference>
<comment type="function">
    <text evidence="1">Reversibly transfers an adenylyl group from ATP to 4'-phosphopantetheine, yielding dephospho-CoA (dPCoA) and pyrophosphate.</text>
</comment>
<comment type="catalytic activity">
    <reaction evidence="1">
        <text>(R)-4'-phosphopantetheine + ATP + H(+) = 3'-dephospho-CoA + diphosphate</text>
        <dbReference type="Rhea" id="RHEA:19801"/>
        <dbReference type="ChEBI" id="CHEBI:15378"/>
        <dbReference type="ChEBI" id="CHEBI:30616"/>
        <dbReference type="ChEBI" id="CHEBI:33019"/>
        <dbReference type="ChEBI" id="CHEBI:57328"/>
        <dbReference type="ChEBI" id="CHEBI:61723"/>
        <dbReference type="EC" id="2.7.7.3"/>
    </reaction>
</comment>
<comment type="cofactor">
    <cofactor evidence="1">
        <name>Mg(2+)</name>
        <dbReference type="ChEBI" id="CHEBI:18420"/>
    </cofactor>
</comment>
<comment type="pathway">
    <text evidence="1">Cofactor biosynthesis; coenzyme A biosynthesis; CoA from (R)-pantothenate: step 4/5.</text>
</comment>
<comment type="subunit">
    <text evidence="1">Homohexamer.</text>
</comment>
<comment type="subcellular location">
    <subcellularLocation>
        <location evidence="1">Cytoplasm</location>
    </subcellularLocation>
</comment>
<comment type="similarity">
    <text evidence="1">Belongs to the bacterial CoaD family.</text>
</comment>
<proteinExistence type="inferred from homology"/>